<name>G3P2_METBF</name>
<dbReference type="EC" id="1.2.1.59" evidence="1"/>
<dbReference type="EMBL" id="CP000099">
    <property type="protein sequence ID" value="AAZ72433.1"/>
    <property type="molecule type" value="Genomic_DNA"/>
</dbReference>
<dbReference type="SMR" id="Q465K9"/>
<dbReference type="STRING" id="269797.Mbar_A3564"/>
<dbReference type="PaxDb" id="269797-Mbar_A3564"/>
<dbReference type="KEGG" id="mba:Mbar_A3564"/>
<dbReference type="eggNOG" id="arCOG00493">
    <property type="taxonomic scope" value="Archaea"/>
</dbReference>
<dbReference type="HOGENOM" id="CLU_069533_0_0_2"/>
<dbReference type="OrthoDB" id="295712at2157"/>
<dbReference type="UniPathway" id="UPA00109">
    <property type="reaction ID" value="UER00184"/>
</dbReference>
<dbReference type="GO" id="GO:0005737">
    <property type="term" value="C:cytoplasm"/>
    <property type="evidence" value="ECO:0007669"/>
    <property type="project" value="UniProtKB-SubCell"/>
</dbReference>
<dbReference type="GO" id="GO:0008839">
    <property type="term" value="F:4-hydroxy-tetrahydrodipicolinate reductase"/>
    <property type="evidence" value="ECO:0007669"/>
    <property type="project" value="InterPro"/>
</dbReference>
<dbReference type="GO" id="GO:0004365">
    <property type="term" value="F:glyceraldehyde-3-phosphate dehydrogenase (NAD+) (phosphorylating) activity"/>
    <property type="evidence" value="ECO:0007669"/>
    <property type="project" value="UniProtKB-UniRule"/>
</dbReference>
<dbReference type="GO" id="GO:0047100">
    <property type="term" value="F:glyceraldehyde-3-phosphate dehydrogenase (NADP+) (phosphorylating) activity"/>
    <property type="evidence" value="ECO:0007669"/>
    <property type="project" value="RHEA"/>
</dbReference>
<dbReference type="GO" id="GO:0051287">
    <property type="term" value="F:NAD binding"/>
    <property type="evidence" value="ECO:0007669"/>
    <property type="project" value="InterPro"/>
</dbReference>
<dbReference type="GO" id="GO:0050661">
    <property type="term" value="F:NADP binding"/>
    <property type="evidence" value="ECO:0007669"/>
    <property type="project" value="InterPro"/>
</dbReference>
<dbReference type="GO" id="GO:0006096">
    <property type="term" value="P:glycolytic process"/>
    <property type="evidence" value="ECO:0007669"/>
    <property type="project" value="UniProtKB-UniRule"/>
</dbReference>
<dbReference type="GO" id="GO:0009089">
    <property type="term" value="P:lysine biosynthetic process via diaminopimelate"/>
    <property type="evidence" value="ECO:0007669"/>
    <property type="project" value="InterPro"/>
</dbReference>
<dbReference type="CDD" id="cd18127">
    <property type="entry name" value="GAPDH_II_C"/>
    <property type="match status" value="1"/>
</dbReference>
<dbReference type="CDD" id="cd02278">
    <property type="entry name" value="GAPDH_II_N"/>
    <property type="match status" value="1"/>
</dbReference>
<dbReference type="Gene3D" id="3.30.360.10">
    <property type="entry name" value="Dihydrodipicolinate Reductase, domain 2"/>
    <property type="match status" value="1"/>
</dbReference>
<dbReference type="Gene3D" id="3.40.50.720">
    <property type="entry name" value="NAD(P)-binding Rossmann-like Domain"/>
    <property type="match status" value="1"/>
</dbReference>
<dbReference type="HAMAP" id="MF_00559">
    <property type="entry name" value="G3P_dehdrog_arch"/>
    <property type="match status" value="1"/>
</dbReference>
<dbReference type="InterPro" id="IPR000846">
    <property type="entry name" value="DapB_N"/>
</dbReference>
<dbReference type="InterPro" id="IPR020831">
    <property type="entry name" value="GlycerAld/Erythrose_P_DH"/>
</dbReference>
<dbReference type="InterPro" id="IPR020830">
    <property type="entry name" value="GlycerAld_3-P_DH_AS"/>
</dbReference>
<dbReference type="InterPro" id="IPR020829">
    <property type="entry name" value="GlycerAld_3-P_DH_cat"/>
</dbReference>
<dbReference type="InterPro" id="IPR020828">
    <property type="entry name" value="GlycerAld_3-P_DH_NAD(P)-bd"/>
</dbReference>
<dbReference type="InterPro" id="IPR006436">
    <property type="entry name" value="Glyceraldehyde-3-P_DH_2_arc"/>
</dbReference>
<dbReference type="InterPro" id="IPR036291">
    <property type="entry name" value="NAD(P)-bd_dom_sf"/>
</dbReference>
<dbReference type="NCBIfam" id="TIGR01546">
    <property type="entry name" value="GAPDH-II_archae"/>
    <property type="match status" value="1"/>
</dbReference>
<dbReference type="NCBIfam" id="NF003251">
    <property type="entry name" value="PRK04207.1"/>
    <property type="match status" value="1"/>
</dbReference>
<dbReference type="Pfam" id="PF01113">
    <property type="entry name" value="DapB_N"/>
    <property type="match status" value="1"/>
</dbReference>
<dbReference type="Pfam" id="PF02800">
    <property type="entry name" value="Gp_dh_C"/>
    <property type="match status" value="1"/>
</dbReference>
<dbReference type="PIRSF" id="PIRSF000149">
    <property type="entry name" value="GAP_DH"/>
    <property type="match status" value="1"/>
</dbReference>
<dbReference type="SMART" id="SM00846">
    <property type="entry name" value="Gp_dh_N"/>
    <property type="match status" value="1"/>
</dbReference>
<dbReference type="SUPFAM" id="SSF55347">
    <property type="entry name" value="Glyceraldehyde-3-phosphate dehydrogenase-like, C-terminal domain"/>
    <property type="match status" value="1"/>
</dbReference>
<dbReference type="SUPFAM" id="SSF51735">
    <property type="entry name" value="NAD(P)-binding Rossmann-fold domains"/>
    <property type="match status" value="1"/>
</dbReference>
<dbReference type="PROSITE" id="PS00071">
    <property type="entry name" value="GAPDH"/>
    <property type="match status" value="1"/>
</dbReference>
<reference key="1">
    <citation type="journal article" date="2006" name="J. Bacteriol.">
        <title>The Methanosarcina barkeri genome: comparative analysis with Methanosarcina acetivorans and Methanosarcina mazei reveals extensive rearrangement within methanosarcinal genomes.</title>
        <authorList>
            <person name="Maeder D.L."/>
            <person name="Anderson I."/>
            <person name="Brettin T.S."/>
            <person name="Bruce D.C."/>
            <person name="Gilna P."/>
            <person name="Han C.S."/>
            <person name="Lapidus A."/>
            <person name="Metcalf W.W."/>
            <person name="Saunders E."/>
            <person name="Tapia R."/>
            <person name="Sowers K.R."/>
        </authorList>
    </citation>
    <scope>NUCLEOTIDE SEQUENCE [LARGE SCALE GENOMIC DNA]</scope>
    <source>
        <strain>Fusaro / DSM 804</strain>
    </source>
</reference>
<gene>
    <name evidence="1" type="primary">gap2</name>
    <name type="ordered locus">Mbar_A3564</name>
</gene>
<sequence>MAKAKIAVNGYGTIGKRVADAVRAQDDMEVVGISKTKPNYEAAVAHRLGYDIYAPAANLEAFEKAGMPAAGSIEEMLEKADLVVDCTPGGIGEKNKPIYEKVGIKAIWQGGESHPIAGFSFNAESNYEQAVGRDLTRVVSCNTTALCRAISTIDRELGVNKVRASLSRRAVDPNEIKKGPVDAIVLNPVKLPSHHGPDVRSVLPHINITTAAIKVPTTLMHVHTVNMEVNKDCTAEDVKNIFGSQSRIRLVGQGITSTAEIIEFARDIGRPRHDMWELCIWPESITVTDKELYFFHAVHQESIVVPENVDAIRAMMELESDGAKSIEKTNKAIGLYNK</sequence>
<protein>
    <recommendedName>
        <fullName evidence="1">Glyceraldehyde-3-phosphate dehydrogenase 2</fullName>
        <shortName evidence="1">GAPDH 2</shortName>
        <ecNumber evidence="1">1.2.1.59</ecNumber>
    </recommendedName>
    <alternativeName>
        <fullName evidence="1">NAD(P)-dependent glyceraldehyde-3-phosphate dehydrogenase 2</fullName>
    </alternativeName>
</protein>
<evidence type="ECO:0000255" key="1">
    <source>
        <dbReference type="HAMAP-Rule" id="MF_00559"/>
    </source>
</evidence>
<comment type="catalytic activity">
    <reaction evidence="1">
        <text>D-glyceraldehyde 3-phosphate + phosphate + NADP(+) = (2R)-3-phospho-glyceroyl phosphate + NADPH + H(+)</text>
        <dbReference type="Rhea" id="RHEA:10296"/>
        <dbReference type="ChEBI" id="CHEBI:15378"/>
        <dbReference type="ChEBI" id="CHEBI:43474"/>
        <dbReference type="ChEBI" id="CHEBI:57604"/>
        <dbReference type="ChEBI" id="CHEBI:57783"/>
        <dbReference type="ChEBI" id="CHEBI:58349"/>
        <dbReference type="ChEBI" id="CHEBI:59776"/>
        <dbReference type="EC" id="1.2.1.59"/>
    </reaction>
</comment>
<comment type="catalytic activity">
    <reaction evidence="1">
        <text>D-glyceraldehyde 3-phosphate + phosphate + NAD(+) = (2R)-3-phospho-glyceroyl phosphate + NADH + H(+)</text>
        <dbReference type="Rhea" id="RHEA:10300"/>
        <dbReference type="ChEBI" id="CHEBI:15378"/>
        <dbReference type="ChEBI" id="CHEBI:43474"/>
        <dbReference type="ChEBI" id="CHEBI:57540"/>
        <dbReference type="ChEBI" id="CHEBI:57604"/>
        <dbReference type="ChEBI" id="CHEBI:57945"/>
        <dbReference type="ChEBI" id="CHEBI:59776"/>
        <dbReference type="EC" id="1.2.1.59"/>
    </reaction>
</comment>
<comment type="pathway">
    <text evidence="1">Carbohydrate degradation; glycolysis; pyruvate from D-glyceraldehyde 3-phosphate: step 1/5.</text>
</comment>
<comment type="subunit">
    <text evidence="1">Homotetramer.</text>
</comment>
<comment type="subcellular location">
    <subcellularLocation>
        <location evidence="1">Cytoplasm</location>
    </subcellularLocation>
</comment>
<comment type="similarity">
    <text evidence="1">Belongs to the glyceraldehyde-3-phosphate dehydrogenase family.</text>
</comment>
<proteinExistence type="inferred from homology"/>
<organism>
    <name type="scientific">Methanosarcina barkeri (strain Fusaro / DSM 804)</name>
    <dbReference type="NCBI Taxonomy" id="269797"/>
    <lineage>
        <taxon>Archaea</taxon>
        <taxon>Methanobacteriati</taxon>
        <taxon>Methanobacteriota</taxon>
        <taxon>Stenosarchaea group</taxon>
        <taxon>Methanomicrobia</taxon>
        <taxon>Methanosarcinales</taxon>
        <taxon>Methanosarcinaceae</taxon>
        <taxon>Methanosarcina</taxon>
    </lineage>
</organism>
<accession>Q465K9</accession>
<feature type="chain" id="PRO_0000232391" description="Glyceraldehyde-3-phosphate dehydrogenase 2">
    <location>
        <begin position="1"/>
        <end position="338"/>
    </location>
</feature>
<feature type="active site" description="Nucleophile" evidence="1">
    <location>
        <position position="141"/>
    </location>
</feature>
<feature type="binding site" evidence="1">
    <location>
        <begin position="13"/>
        <end position="14"/>
    </location>
    <ligand>
        <name>NAD(+)</name>
        <dbReference type="ChEBI" id="CHEBI:57540"/>
    </ligand>
</feature>
<feature type="binding site" evidence="1">
    <location>
        <position position="111"/>
    </location>
    <ligand>
        <name>NAD(+)</name>
        <dbReference type="ChEBI" id="CHEBI:57540"/>
    </ligand>
</feature>
<feature type="binding site" evidence="1">
    <location>
        <begin position="140"/>
        <end position="142"/>
    </location>
    <ligand>
        <name>D-glyceraldehyde 3-phosphate</name>
        <dbReference type="ChEBI" id="CHEBI:59776"/>
    </ligand>
</feature>
<feature type="binding site" evidence="1">
    <location>
        <position position="169"/>
    </location>
    <ligand>
        <name>NAD(+)</name>
        <dbReference type="ChEBI" id="CHEBI:57540"/>
    </ligand>
</feature>
<feature type="binding site" evidence="1">
    <location>
        <begin position="195"/>
        <end position="196"/>
    </location>
    <ligand>
        <name>D-glyceraldehyde 3-phosphate</name>
        <dbReference type="ChEBI" id="CHEBI:59776"/>
    </ligand>
</feature>
<feature type="binding site" evidence="1">
    <location>
        <position position="300"/>
    </location>
    <ligand>
        <name>NAD(+)</name>
        <dbReference type="ChEBI" id="CHEBI:57540"/>
    </ligand>
</feature>
<keyword id="KW-0963">Cytoplasm</keyword>
<keyword id="KW-0324">Glycolysis</keyword>
<keyword id="KW-0520">NAD</keyword>
<keyword id="KW-0521">NADP</keyword>
<keyword id="KW-0560">Oxidoreductase</keyword>